<name>RPOC_SALRD</name>
<dbReference type="EC" id="2.7.7.6" evidence="1"/>
<dbReference type="EMBL" id="CP000159">
    <property type="protein sequence ID" value="ABC43640.1"/>
    <property type="molecule type" value="Genomic_DNA"/>
</dbReference>
<dbReference type="RefSeq" id="WP_011404501.1">
    <property type="nucleotide sequence ID" value="NC_007677.1"/>
</dbReference>
<dbReference type="RefSeq" id="YP_445875.1">
    <property type="nucleotide sequence ID" value="NC_007677.1"/>
</dbReference>
<dbReference type="SMR" id="Q2S1Q6"/>
<dbReference type="STRING" id="309807.SRU_1757"/>
<dbReference type="EnsemblBacteria" id="ABC43640">
    <property type="protein sequence ID" value="ABC43640"/>
    <property type="gene ID" value="SRU_1757"/>
</dbReference>
<dbReference type="GeneID" id="83728686"/>
<dbReference type="KEGG" id="sru:SRU_1757"/>
<dbReference type="PATRIC" id="fig|309807.25.peg.1824"/>
<dbReference type="eggNOG" id="COG0086">
    <property type="taxonomic scope" value="Bacteria"/>
</dbReference>
<dbReference type="HOGENOM" id="CLU_000524_3_1_10"/>
<dbReference type="OrthoDB" id="9815296at2"/>
<dbReference type="Proteomes" id="UP000008674">
    <property type="component" value="Chromosome"/>
</dbReference>
<dbReference type="GO" id="GO:0000428">
    <property type="term" value="C:DNA-directed RNA polymerase complex"/>
    <property type="evidence" value="ECO:0007669"/>
    <property type="project" value="UniProtKB-KW"/>
</dbReference>
<dbReference type="GO" id="GO:0003677">
    <property type="term" value="F:DNA binding"/>
    <property type="evidence" value="ECO:0007669"/>
    <property type="project" value="UniProtKB-UniRule"/>
</dbReference>
<dbReference type="GO" id="GO:0003899">
    <property type="term" value="F:DNA-directed RNA polymerase activity"/>
    <property type="evidence" value="ECO:0007669"/>
    <property type="project" value="UniProtKB-UniRule"/>
</dbReference>
<dbReference type="GO" id="GO:0000287">
    <property type="term" value="F:magnesium ion binding"/>
    <property type="evidence" value="ECO:0007669"/>
    <property type="project" value="UniProtKB-UniRule"/>
</dbReference>
<dbReference type="GO" id="GO:0008270">
    <property type="term" value="F:zinc ion binding"/>
    <property type="evidence" value="ECO:0007669"/>
    <property type="project" value="UniProtKB-UniRule"/>
</dbReference>
<dbReference type="GO" id="GO:0006351">
    <property type="term" value="P:DNA-templated transcription"/>
    <property type="evidence" value="ECO:0007669"/>
    <property type="project" value="UniProtKB-UniRule"/>
</dbReference>
<dbReference type="CDD" id="cd02655">
    <property type="entry name" value="RNAP_beta'_C"/>
    <property type="match status" value="1"/>
</dbReference>
<dbReference type="CDD" id="cd01609">
    <property type="entry name" value="RNAP_beta'_N"/>
    <property type="match status" value="1"/>
</dbReference>
<dbReference type="Gene3D" id="1.10.132.30">
    <property type="match status" value="1"/>
</dbReference>
<dbReference type="Gene3D" id="1.10.150.390">
    <property type="match status" value="1"/>
</dbReference>
<dbReference type="Gene3D" id="1.10.1790.20">
    <property type="match status" value="1"/>
</dbReference>
<dbReference type="Gene3D" id="1.10.40.90">
    <property type="match status" value="1"/>
</dbReference>
<dbReference type="Gene3D" id="2.40.40.20">
    <property type="match status" value="1"/>
</dbReference>
<dbReference type="Gene3D" id="2.40.50.100">
    <property type="match status" value="3"/>
</dbReference>
<dbReference type="Gene3D" id="3.30.60.280">
    <property type="match status" value="1"/>
</dbReference>
<dbReference type="Gene3D" id="4.10.860.120">
    <property type="entry name" value="RNA polymerase II, clamp domain"/>
    <property type="match status" value="1"/>
</dbReference>
<dbReference type="Gene3D" id="1.10.274.100">
    <property type="entry name" value="RNA polymerase Rpb1, domain 3"/>
    <property type="match status" value="2"/>
</dbReference>
<dbReference type="HAMAP" id="MF_01322">
    <property type="entry name" value="RNApol_bact_RpoC"/>
    <property type="match status" value="1"/>
</dbReference>
<dbReference type="InterPro" id="IPR045867">
    <property type="entry name" value="DNA-dir_RpoC_beta_prime"/>
</dbReference>
<dbReference type="InterPro" id="IPR012754">
    <property type="entry name" value="DNA-dir_RpoC_beta_prime_bact"/>
</dbReference>
<dbReference type="InterPro" id="IPR000722">
    <property type="entry name" value="RNA_pol_asu"/>
</dbReference>
<dbReference type="InterPro" id="IPR006592">
    <property type="entry name" value="RNA_pol_N"/>
</dbReference>
<dbReference type="InterPro" id="IPR007080">
    <property type="entry name" value="RNA_pol_Rpb1_1"/>
</dbReference>
<dbReference type="InterPro" id="IPR007066">
    <property type="entry name" value="RNA_pol_Rpb1_3"/>
</dbReference>
<dbReference type="InterPro" id="IPR042102">
    <property type="entry name" value="RNA_pol_Rpb1_3_sf"/>
</dbReference>
<dbReference type="InterPro" id="IPR007083">
    <property type="entry name" value="RNA_pol_Rpb1_4"/>
</dbReference>
<dbReference type="InterPro" id="IPR007081">
    <property type="entry name" value="RNA_pol_Rpb1_5"/>
</dbReference>
<dbReference type="InterPro" id="IPR044893">
    <property type="entry name" value="RNA_pol_Rpb1_clamp_domain"/>
</dbReference>
<dbReference type="InterPro" id="IPR038120">
    <property type="entry name" value="Rpb1_funnel_sf"/>
</dbReference>
<dbReference type="InterPro" id="IPR011054">
    <property type="entry name" value="Rudment_hybrid_motif"/>
</dbReference>
<dbReference type="NCBIfam" id="TIGR02386">
    <property type="entry name" value="rpoC_TIGR"/>
    <property type="match status" value="1"/>
</dbReference>
<dbReference type="PANTHER" id="PTHR19376">
    <property type="entry name" value="DNA-DIRECTED RNA POLYMERASE"/>
    <property type="match status" value="1"/>
</dbReference>
<dbReference type="PANTHER" id="PTHR19376:SF54">
    <property type="entry name" value="DNA-DIRECTED RNA POLYMERASE SUBUNIT BETA"/>
    <property type="match status" value="1"/>
</dbReference>
<dbReference type="Pfam" id="PF04997">
    <property type="entry name" value="RNA_pol_Rpb1_1"/>
    <property type="match status" value="1"/>
</dbReference>
<dbReference type="Pfam" id="PF00623">
    <property type="entry name" value="RNA_pol_Rpb1_2"/>
    <property type="match status" value="1"/>
</dbReference>
<dbReference type="Pfam" id="PF04983">
    <property type="entry name" value="RNA_pol_Rpb1_3"/>
    <property type="match status" value="1"/>
</dbReference>
<dbReference type="Pfam" id="PF05000">
    <property type="entry name" value="RNA_pol_Rpb1_4"/>
    <property type="match status" value="1"/>
</dbReference>
<dbReference type="Pfam" id="PF04998">
    <property type="entry name" value="RNA_pol_Rpb1_5"/>
    <property type="match status" value="1"/>
</dbReference>
<dbReference type="SMART" id="SM00663">
    <property type="entry name" value="RPOLA_N"/>
    <property type="match status" value="1"/>
</dbReference>
<dbReference type="SUPFAM" id="SSF64484">
    <property type="entry name" value="beta and beta-prime subunits of DNA dependent RNA-polymerase"/>
    <property type="match status" value="1"/>
</dbReference>
<dbReference type="SUPFAM" id="SSF51246">
    <property type="entry name" value="Rudiment single hybrid motif"/>
    <property type="match status" value="1"/>
</dbReference>
<keyword id="KW-0240">DNA-directed RNA polymerase</keyword>
<keyword id="KW-0460">Magnesium</keyword>
<keyword id="KW-0479">Metal-binding</keyword>
<keyword id="KW-0548">Nucleotidyltransferase</keyword>
<keyword id="KW-1185">Reference proteome</keyword>
<keyword id="KW-0804">Transcription</keyword>
<keyword id="KW-0808">Transferase</keyword>
<keyword id="KW-0862">Zinc</keyword>
<organism>
    <name type="scientific">Salinibacter ruber (strain DSM 13855 / M31)</name>
    <dbReference type="NCBI Taxonomy" id="309807"/>
    <lineage>
        <taxon>Bacteria</taxon>
        <taxon>Pseudomonadati</taxon>
        <taxon>Rhodothermota</taxon>
        <taxon>Rhodothermia</taxon>
        <taxon>Rhodothermales</taxon>
        <taxon>Salinibacteraceae</taxon>
        <taxon>Salinibacter</taxon>
    </lineage>
</organism>
<proteinExistence type="inferred from homology"/>
<comment type="function">
    <text evidence="1">DNA-dependent RNA polymerase catalyzes the transcription of DNA into RNA using the four ribonucleoside triphosphates as substrates.</text>
</comment>
<comment type="catalytic activity">
    <reaction evidence="1">
        <text>RNA(n) + a ribonucleoside 5'-triphosphate = RNA(n+1) + diphosphate</text>
        <dbReference type="Rhea" id="RHEA:21248"/>
        <dbReference type="Rhea" id="RHEA-COMP:14527"/>
        <dbReference type="Rhea" id="RHEA-COMP:17342"/>
        <dbReference type="ChEBI" id="CHEBI:33019"/>
        <dbReference type="ChEBI" id="CHEBI:61557"/>
        <dbReference type="ChEBI" id="CHEBI:140395"/>
        <dbReference type="EC" id="2.7.7.6"/>
    </reaction>
</comment>
<comment type="cofactor">
    <cofactor evidence="1">
        <name>Mg(2+)</name>
        <dbReference type="ChEBI" id="CHEBI:18420"/>
    </cofactor>
    <text evidence="1">Binds 1 Mg(2+) ion per subunit.</text>
</comment>
<comment type="cofactor">
    <cofactor evidence="1">
        <name>Zn(2+)</name>
        <dbReference type="ChEBI" id="CHEBI:29105"/>
    </cofactor>
    <text evidence="1">Binds 2 Zn(2+) ions per subunit.</text>
</comment>
<comment type="subunit">
    <text evidence="1">The RNAP catalytic core consists of 2 alpha, 1 beta, 1 beta' and 1 omega subunit. When a sigma factor is associated with the core the holoenzyme is formed, which can initiate transcription.</text>
</comment>
<comment type="similarity">
    <text evidence="1">Belongs to the RNA polymerase beta' chain family.</text>
</comment>
<protein>
    <recommendedName>
        <fullName evidence="1">DNA-directed RNA polymerase subunit beta'</fullName>
        <shortName evidence="1">RNAP subunit beta'</shortName>
        <ecNumber evidence="1">2.7.7.6</ecNumber>
    </recommendedName>
    <alternativeName>
        <fullName evidence="1">RNA polymerase subunit beta'</fullName>
    </alternativeName>
    <alternativeName>
        <fullName evidence="1">Transcriptase subunit beta'</fullName>
    </alternativeName>
</protein>
<sequence>MPYGNSKEIETDFDSITISLASPEDILERSYGEVMKPETINYRSFKPEMGGLFCEKIFGPVKDYECHCGKYKRIRYKGIICDRCGVEVTRKAVRRERMGHISLSVPVVHIWYFKTLPNKIGHLLGLKSKDLEKVIYYENYIVIQPGTAERLGVEENQLLTEEEYYEILYQIRDDNNRLQDDNEEKFIAKIGGEAVETMLERLELDKLAQELRYQVRTETSQQRKSKALKRLDVVEAFREANEDGTNKPEWMVMRVIPVIPPELRPLVPLDGGRFATSDLNDLYRRVIIRNNRLKRLIDIKAPEVILRNEKRMLQEAVDSLFDNSRKSNSVRGSSNRPLKSLSDMLKGKQGRFRQNLLGKRVDYSGRSVIVSGPHLELHQCGLPKEMAVELFKPFIIRRLIERGIVKTVKSAKKYVDKKTEDVWDILEKVIQGRPVLLNRAPTLHRLGIQAFQPVLTENKAIEIHPLVCPAYNADFDGDQMAVHVPLSHEACLESMVLMLSSHNVRSPADGGPLAVPSQDMILGLYYITKAKSNQKGEGMRFANVQEVRQAFDQDQVALHAKIQLRDPDGSGEMIDTTVGRVIFNETLPDTLDYVNEVLSTKNVRPVIARVLKQTGFEETADFLDAIKDMGFRRSTTSGMTFSLSDIIIPDEKEELIEEANETVEEAEQNYSMGFITDNERYNQVIDVWTKTNNKVSEVLFDALKEHKEGFNPIFTMADSGARGSQEQIRQLGGMRGLMAKPQKNIGEGGGGGEILENPILSNFKEGLTVQEYFISTHGSRKGLADTALKTADAGYLTRRLVDVSQSVTVTEHDCGTLRGINVGALKDNEEVVAPLSDRITGRVSVRDVYDPHTDELIVEANELITDEIADDIAQTSIEEIEIRSVLTCEAERGVCTLCYGQNLATGRMVEVGESVGVVAAQSIGEPGTQLTLRTFHTGGTATREVGESTIQAKFAGTLEFENLRTVTYEDTDGPKEVVLSRQGEVRIMDTDGDRRELTSYVVPYGAELLVDEGEDVEDGDVLASWDPYNSLILTEANGTVRFEDIIEDTTYREETDEQTGHKEKVIVESRERTLTPAVIVETEDGEQREYNMPVDARIQVDEGDEVQAGQTLAKMPRQAAQTSDITGGLPRVEELFEARTPDEPAVVSEIDGIVSFGDQKRGSQEVIVTSRDGDMEKSYMVSLSKHMLVHEGDYVEAGDRLCDGQIAPHDILSIKGPRAVQEHLLNEVQEVYRLQGVDIDDKHFEVVIRQMMKRVKITEPGDTNFLEEDQVDRQKMASINDDLYDKFVVKDPSDANVEIGEVIGRRRLRELNSELKREDKPEIEVREARPAVGEPLLLGITKASLATDSMISAASFQETTKVLTNSAIRSRTDPLEGLKENVVAGHSIPAGTGQREYRDLVVGSKSELEELQAAIGGDGESPSGDGAAGDGAPSEEDVEQIEASGSEN</sequence>
<accession>Q2S1Q6</accession>
<evidence type="ECO:0000255" key="1">
    <source>
        <dbReference type="HAMAP-Rule" id="MF_01322"/>
    </source>
</evidence>
<evidence type="ECO:0000256" key="2">
    <source>
        <dbReference type="SAM" id="MobiDB-lite"/>
    </source>
</evidence>
<reference key="1">
    <citation type="journal article" date="2005" name="Proc. Natl. Acad. Sci. U.S.A.">
        <title>The genome of Salinibacter ruber: convergence and gene exchange among hyperhalophilic bacteria and archaea.</title>
        <authorList>
            <person name="Mongodin E.F."/>
            <person name="Nelson K.E."/>
            <person name="Daugherty S."/>
            <person name="DeBoy R.T."/>
            <person name="Wister J."/>
            <person name="Khouri H."/>
            <person name="Weidman J."/>
            <person name="Walsh D.A."/>
            <person name="Papke R.T."/>
            <person name="Sanchez Perez G."/>
            <person name="Sharma A.K."/>
            <person name="Nesbo C.L."/>
            <person name="MacLeod D."/>
            <person name="Bapteste E."/>
            <person name="Doolittle W.F."/>
            <person name="Charlebois R.L."/>
            <person name="Legault B."/>
            <person name="Rodriguez-Valera F."/>
        </authorList>
    </citation>
    <scope>NUCLEOTIDE SEQUENCE [LARGE SCALE GENOMIC DNA]</scope>
    <source>
        <strain>DSM 13855 / CECT 5946 / M31</strain>
    </source>
</reference>
<feature type="chain" id="PRO_0000240823" description="DNA-directed RNA polymerase subunit beta'">
    <location>
        <begin position="1"/>
        <end position="1448"/>
    </location>
</feature>
<feature type="region of interest" description="Disordered" evidence="2">
    <location>
        <begin position="1408"/>
        <end position="1448"/>
    </location>
</feature>
<feature type="binding site" evidence="1">
    <location>
        <position position="66"/>
    </location>
    <ligand>
        <name>Zn(2+)</name>
        <dbReference type="ChEBI" id="CHEBI:29105"/>
        <label>1</label>
    </ligand>
</feature>
<feature type="binding site" evidence="1">
    <location>
        <position position="68"/>
    </location>
    <ligand>
        <name>Zn(2+)</name>
        <dbReference type="ChEBI" id="CHEBI:29105"/>
        <label>1</label>
    </ligand>
</feature>
<feature type="binding site" evidence="1">
    <location>
        <position position="81"/>
    </location>
    <ligand>
        <name>Zn(2+)</name>
        <dbReference type="ChEBI" id="CHEBI:29105"/>
        <label>1</label>
    </ligand>
</feature>
<feature type="binding site" evidence="1">
    <location>
        <position position="84"/>
    </location>
    <ligand>
        <name>Zn(2+)</name>
        <dbReference type="ChEBI" id="CHEBI:29105"/>
        <label>1</label>
    </ligand>
</feature>
<feature type="binding site" evidence="1">
    <location>
        <position position="474"/>
    </location>
    <ligand>
        <name>Mg(2+)</name>
        <dbReference type="ChEBI" id="CHEBI:18420"/>
    </ligand>
</feature>
<feature type="binding site" evidence="1">
    <location>
        <position position="476"/>
    </location>
    <ligand>
        <name>Mg(2+)</name>
        <dbReference type="ChEBI" id="CHEBI:18420"/>
    </ligand>
</feature>
<feature type="binding site" evidence="1">
    <location>
        <position position="478"/>
    </location>
    <ligand>
        <name>Mg(2+)</name>
        <dbReference type="ChEBI" id="CHEBI:18420"/>
    </ligand>
</feature>
<feature type="binding site" evidence="1">
    <location>
        <position position="814"/>
    </location>
    <ligand>
        <name>Zn(2+)</name>
        <dbReference type="ChEBI" id="CHEBI:29105"/>
        <label>2</label>
    </ligand>
</feature>
<feature type="binding site" evidence="1">
    <location>
        <position position="888"/>
    </location>
    <ligand>
        <name>Zn(2+)</name>
        <dbReference type="ChEBI" id="CHEBI:29105"/>
        <label>2</label>
    </ligand>
</feature>
<feature type="binding site" evidence="1">
    <location>
        <position position="895"/>
    </location>
    <ligand>
        <name>Zn(2+)</name>
        <dbReference type="ChEBI" id="CHEBI:29105"/>
        <label>2</label>
    </ligand>
</feature>
<feature type="binding site" evidence="1">
    <location>
        <position position="898"/>
    </location>
    <ligand>
        <name>Zn(2+)</name>
        <dbReference type="ChEBI" id="CHEBI:29105"/>
        <label>2</label>
    </ligand>
</feature>
<gene>
    <name evidence="1" type="primary">rpoC</name>
    <name type="ordered locus">SRU_1757</name>
</gene>